<sequence>MDHDPKERLLLPPRAAAAAAANGPHRRAAPAAGGGGGGVAIDVHGLKRRGGGRRSWVRVDAATGASEAVEVAKPALMRRLDLPARDLRLLDPLFVYPSAILGRERAVVCNLERIRCIITADEALILRDPDVAGGGAETEEAVRRYVAELQRRLVDRADDLPFEFIALEVALEAACSFLDAQAVELEADAYPLLDELTTKISTLNLERVRRLKSKLVALTRRVQKVRDEIEQLMDDDGDMAEMYLTEKKRRMEASLLEEQAFQGMGNSGFGSSFSAPVSPVSSPPASRRLEKELSFARSRHDSFKSADSSQYSIEELEMLLEAYFVVIDYTLSKLTSLKEYIDDTEDFINIQLDNVRNQLIQFELLLTTATFVVAIFGVVSGVFGMNFEVDLFNVPHAFEWTLVITGVCGLVIFCCFIWYFKKRRFFPL</sequence>
<accession>A2XV81</accession>
<accession>Q7XU85</accession>
<gene>
    <name type="ORF">H0311C03.3</name>
    <name type="ORF">OsI_16518</name>
</gene>
<protein>
    <recommendedName>
        <fullName>Magnesium transporter MRS2-C</fullName>
    </recommendedName>
</protein>
<proteinExistence type="inferred from homology"/>
<dbReference type="EMBL" id="CR855212">
    <property type="protein sequence ID" value="CAH67549.1"/>
    <property type="molecule type" value="Genomic_DNA"/>
</dbReference>
<dbReference type="EMBL" id="CM000129">
    <property type="protein sequence ID" value="EAY94741.1"/>
    <property type="status" value="ALT_SEQ"/>
    <property type="molecule type" value="Genomic_DNA"/>
</dbReference>
<dbReference type="SMR" id="A2XV81"/>
<dbReference type="HOGENOM" id="CLU_034694_1_0_1"/>
<dbReference type="Proteomes" id="UP000007015">
    <property type="component" value="Chromosome 4"/>
</dbReference>
<dbReference type="GO" id="GO:0016020">
    <property type="term" value="C:membrane"/>
    <property type="evidence" value="ECO:0007669"/>
    <property type="project" value="UniProtKB-SubCell"/>
</dbReference>
<dbReference type="GO" id="GO:0015095">
    <property type="term" value="F:magnesium ion transmembrane transporter activity"/>
    <property type="evidence" value="ECO:0007669"/>
    <property type="project" value="UniProtKB-ARBA"/>
</dbReference>
<dbReference type="CDD" id="cd12823">
    <property type="entry name" value="Mrs2_Mfm1p-like"/>
    <property type="match status" value="1"/>
</dbReference>
<dbReference type="FunFam" id="1.20.58.340:FF:000009">
    <property type="entry name" value="Magnesium transporter MRS2-1"/>
    <property type="match status" value="1"/>
</dbReference>
<dbReference type="FunFam" id="2.40.128.330:FF:000001">
    <property type="entry name" value="Magnesium transporter MRS2-1"/>
    <property type="match status" value="1"/>
</dbReference>
<dbReference type="Gene3D" id="2.40.128.330">
    <property type="match status" value="1"/>
</dbReference>
<dbReference type="Gene3D" id="1.20.58.340">
    <property type="entry name" value="Magnesium transport protein CorA, transmembrane region"/>
    <property type="match status" value="2"/>
</dbReference>
<dbReference type="InterPro" id="IPR045863">
    <property type="entry name" value="CorA_TM1_TM2"/>
</dbReference>
<dbReference type="InterPro" id="IPR039204">
    <property type="entry name" value="MRS2-like"/>
</dbReference>
<dbReference type="PANTHER" id="PTHR13890:SF10">
    <property type="entry name" value="MAGNESIUM TRANSPORTER MRS2-C"/>
    <property type="match status" value="1"/>
</dbReference>
<dbReference type="PANTHER" id="PTHR13890">
    <property type="entry name" value="RNA SPLICING PROTEIN MRS2, MITOCHONDRIAL"/>
    <property type="match status" value="1"/>
</dbReference>
<dbReference type="Pfam" id="PF22099">
    <property type="entry name" value="MRS2-like"/>
    <property type="match status" value="1"/>
</dbReference>
<dbReference type="SUPFAM" id="SSF144083">
    <property type="entry name" value="Magnesium transport protein CorA, transmembrane region"/>
    <property type="match status" value="1"/>
</dbReference>
<keyword id="KW-0406">Ion transport</keyword>
<keyword id="KW-0460">Magnesium</keyword>
<keyword id="KW-0472">Membrane</keyword>
<keyword id="KW-1185">Reference proteome</keyword>
<keyword id="KW-0812">Transmembrane</keyword>
<keyword id="KW-1133">Transmembrane helix</keyword>
<keyword id="KW-0813">Transport</keyword>
<reference key="1">
    <citation type="journal article" date="2002" name="Nature">
        <title>Sequence and analysis of rice chromosome 4.</title>
        <authorList>
            <person name="Feng Q."/>
            <person name="Zhang Y."/>
            <person name="Hao P."/>
            <person name="Wang S."/>
            <person name="Fu G."/>
            <person name="Huang Y."/>
            <person name="Li Y."/>
            <person name="Zhu J."/>
            <person name="Liu Y."/>
            <person name="Hu X."/>
            <person name="Jia P."/>
            <person name="Zhang Y."/>
            <person name="Zhao Q."/>
            <person name="Ying K."/>
            <person name="Yu S."/>
            <person name="Tang Y."/>
            <person name="Weng Q."/>
            <person name="Zhang L."/>
            <person name="Lu Y."/>
            <person name="Mu J."/>
            <person name="Lu Y."/>
            <person name="Zhang L.S."/>
            <person name="Yu Z."/>
            <person name="Fan D."/>
            <person name="Liu X."/>
            <person name="Lu T."/>
            <person name="Li C."/>
            <person name="Wu Y."/>
            <person name="Sun T."/>
            <person name="Lei H."/>
            <person name="Li T."/>
            <person name="Hu H."/>
            <person name="Guan J."/>
            <person name="Wu M."/>
            <person name="Zhang R."/>
            <person name="Zhou B."/>
            <person name="Chen Z."/>
            <person name="Chen L."/>
            <person name="Jin Z."/>
            <person name="Wang R."/>
            <person name="Yin H."/>
            <person name="Cai Z."/>
            <person name="Ren S."/>
            <person name="Lv G."/>
            <person name="Gu W."/>
            <person name="Zhu G."/>
            <person name="Tu Y."/>
            <person name="Jia J."/>
            <person name="Zhang Y."/>
            <person name="Chen J."/>
            <person name="Kang H."/>
            <person name="Chen X."/>
            <person name="Shao C."/>
            <person name="Sun Y."/>
            <person name="Hu Q."/>
            <person name="Zhang X."/>
            <person name="Zhang W."/>
            <person name="Wang L."/>
            <person name="Ding C."/>
            <person name="Sheng H."/>
            <person name="Gu J."/>
            <person name="Chen S."/>
            <person name="Ni L."/>
            <person name="Zhu F."/>
            <person name="Chen W."/>
            <person name="Lan L."/>
            <person name="Lai Y."/>
            <person name="Cheng Z."/>
            <person name="Gu M."/>
            <person name="Jiang J."/>
            <person name="Li J."/>
            <person name="Hong G."/>
            <person name="Xue Y."/>
            <person name="Han B."/>
        </authorList>
    </citation>
    <scope>NUCLEOTIDE SEQUENCE [LARGE SCALE GENOMIC DNA]</scope>
    <source>
        <strain>cv. Guang-Lu-Ai No.4</strain>
    </source>
</reference>
<reference key="2">
    <citation type="journal article" date="2005" name="PLoS Biol.">
        <title>The genomes of Oryza sativa: a history of duplications.</title>
        <authorList>
            <person name="Yu J."/>
            <person name="Wang J."/>
            <person name="Lin W."/>
            <person name="Li S."/>
            <person name="Li H."/>
            <person name="Zhou J."/>
            <person name="Ni P."/>
            <person name="Dong W."/>
            <person name="Hu S."/>
            <person name="Zeng C."/>
            <person name="Zhang J."/>
            <person name="Zhang Y."/>
            <person name="Li R."/>
            <person name="Xu Z."/>
            <person name="Li S."/>
            <person name="Li X."/>
            <person name="Zheng H."/>
            <person name="Cong L."/>
            <person name="Lin L."/>
            <person name="Yin J."/>
            <person name="Geng J."/>
            <person name="Li G."/>
            <person name="Shi J."/>
            <person name="Liu J."/>
            <person name="Lv H."/>
            <person name="Li J."/>
            <person name="Wang J."/>
            <person name="Deng Y."/>
            <person name="Ran L."/>
            <person name="Shi X."/>
            <person name="Wang X."/>
            <person name="Wu Q."/>
            <person name="Li C."/>
            <person name="Ren X."/>
            <person name="Wang J."/>
            <person name="Wang X."/>
            <person name="Li D."/>
            <person name="Liu D."/>
            <person name="Zhang X."/>
            <person name="Ji Z."/>
            <person name="Zhao W."/>
            <person name="Sun Y."/>
            <person name="Zhang Z."/>
            <person name="Bao J."/>
            <person name="Han Y."/>
            <person name="Dong L."/>
            <person name="Ji J."/>
            <person name="Chen P."/>
            <person name="Wu S."/>
            <person name="Liu J."/>
            <person name="Xiao Y."/>
            <person name="Bu D."/>
            <person name="Tan J."/>
            <person name="Yang L."/>
            <person name="Ye C."/>
            <person name="Zhang J."/>
            <person name="Xu J."/>
            <person name="Zhou Y."/>
            <person name="Yu Y."/>
            <person name="Zhang B."/>
            <person name="Zhuang S."/>
            <person name="Wei H."/>
            <person name="Liu B."/>
            <person name="Lei M."/>
            <person name="Yu H."/>
            <person name="Li Y."/>
            <person name="Xu H."/>
            <person name="Wei S."/>
            <person name="He X."/>
            <person name="Fang L."/>
            <person name="Zhang Z."/>
            <person name="Zhang Y."/>
            <person name="Huang X."/>
            <person name="Su Z."/>
            <person name="Tong W."/>
            <person name="Li J."/>
            <person name="Tong Z."/>
            <person name="Li S."/>
            <person name="Ye J."/>
            <person name="Wang L."/>
            <person name="Fang L."/>
            <person name="Lei T."/>
            <person name="Chen C.-S."/>
            <person name="Chen H.-C."/>
            <person name="Xu Z."/>
            <person name="Li H."/>
            <person name="Huang H."/>
            <person name="Zhang F."/>
            <person name="Xu H."/>
            <person name="Li N."/>
            <person name="Zhao C."/>
            <person name="Li S."/>
            <person name="Dong L."/>
            <person name="Huang Y."/>
            <person name="Li L."/>
            <person name="Xi Y."/>
            <person name="Qi Q."/>
            <person name="Li W."/>
            <person name="Zhang B."/>
            <person name="Hu W."/>
            <person name="Zhang Y."/>
            <person name="Tian X."/>
            <person name="Jiao Y."/>
            <person name="Liang X."/>
            <person name="Jin J."/>
            <person name="Gao L."/>
            <person name="Zheng W."/>
            <person name="Hao B."/>
            <person name="Liu S.-M."/>
            <person name="Wang W."/>
            <person name="Yuan L."/>
            <person name="Cao M."/>
            <person name="McDermott J."/>
            <person name="Samudrala R."/>
            <person name="Wang J."/>
            <person name="Wong G.K.-S."/>
            <person name="Yang H."/>
        </authorList>
    </citation>
    <scope>NUCLEOTIDE SEQUENCE [LARGE SCALE GENOMIC DNA]</scope>
    <source>
        <strain>cv. 93-11</strain>
    </source>
</reference>
<comment type="function">
    <text evidence="1">Magnesium transporter that may mediate the influx of magnesium.</text>
</comment>
<comment type="subcellular location">
    <subcellularLocation>
        <location evidence="1">Membrane</location>
        <topology evidence="1">Multi-pass membrane protein</topology>
    </subcellularLocation>
</comment>
<comment type="similarity">
    <text evidence="3">Belongs to the CorA metal ion transporter (MIT) (TC 1.A.35.5) family.</text>
</comment>
<comment type="sequence caution" evidence="3">
    <conflict type="erroneous gene model prediction">
        <sequence resource="EMBL-CDS" id="EAY94741"/>
    </conflict>
</comment>
<name>MRS2C_ORYSI</name>
<organism>
    <name type="scientific">Oryza sativa subsp. indica</name>
    <name type="common">Rice</name>
    <dbReference type="NCBI Taxonomy" id="39946"/>
    <lineage>
        <taxon>Eukaryota</taxon>
        <taxon>Viridiplantae</taxon>
        <taxon>Streptophyta</taxon>
        <taxon>Embryophyta</taxon>
        <taxon>Tracheophyta</taxon>
        <taxon>Spermatophyta</taxon>
        <taxon>Magnoliopsida</taxon>
        <taxon>Liliopsida</taxon>
        <taxon>Poales</taxon>
        <taxon>Poaceae</taxon>
        <taxon>BOP clade</taxon>
        <taxon>Oryzoideae</taxon>
        <taxon>Oryzeae</taxon>
        <taxon>Oryzinae</taxon>
        <taxon>Oryza</taxon>
        <taxon>Oryza sativa</taxon>
    </lineage>
</organism>
<feature type="chain" id="PRO_0000394270" description="Magnesium transporter MRS2-C">
    <location>
        <begin position="1"/>
        <end position="428"/>
    </location>
</feature>
<feature type="transmembrane region" description="Helical" evidence="2">
    <location>
        <begin position="364"/>
        <end position="384"/>
    </location>
</feature>
<feature type="transmembrane region" description="Helical" evidence="2">
    <location>
        <begin position="400"/>
        <end position="420"/>
    </location>
</feature>
<feature type="short sequence motif" description="Required for magnesium transport activity">
    <location>
        <begin position="384"/>
        <end position="386"/>
    </location>
</feature>
<evidence type="ECO:0000250" key="1"/>
<evidence type="ECO:0000255" key="2"/>
<evidence type="ECO:0000305" key="3"/>